<sequence length="400" mass="44038">MDAWRGMPRWGLLLLLWGSCTFGLPTETTTFKRISLKRMPSIRESLKERGVDMARLGPERMALVNITSSVILTNYMDTQYYGEIGIGTPPQTFKVVFDTGSSNVWVPSSKCSRLYTACVYHKLFDASDSSSYKHNGTELTLRYSTGTVSGFLSQDVITVGGITVTQTFGEVTEMPALPFMLAEFDGVVGMGFSEQAIGKVTPLFDNIISQGLLKEDVFSFYYNRDSENSQSLGGQIVLGGSDPQHYEGNFHYINLIRTGLWQIPMKGVSVGSSTLLCEDGCLALVDTGASYISGSTSSIEKLMEALGAKKRLFDYVVKCNEGPTLPDISFHLGGKEYTLTSADYVFQESYSSKKLCTLAIHAMDIPPPTGPTWALGATFIRKFYTEFDRGNNRIGFALAR</sequence>
<accession>Q9TSZ1</accession>
<proteinExistence type="evidence at transcript level"/>
<gene>
    <name type="primary">REN</name>
</gene>
<name>RENI_CALJA</name>
<comment type="function">
    <text evidence="1">Renin is a highly specific endopeptidase, whose only known function is to generate angiotensin I from angiotensinogen in the plasma, initiating a cascade of reactions that produce an elevation of blood pressure and increased sodium retention by the kidney.</text>
</comment>
<comment type="catalytic activity">
    <reaction evidence="1">
        <text>Cleavage of Leu-|-Xaa bond in angiotensinogen to generate angiotensin I.</text>
        <dbReference type="EC" id="3.4.23.15"/>
    </reaction>
</comment>
<comment type="activity regulation">
    <text evidence="1">Interaction with ATP6AP2 results in a 5-fold increased efficiency in angiotensinogen processing.</text>
</comment>
<comment type="subunit">
    <text evidence="1">Interacts with ATP6AP2.</text>
</comment>
<comment type="subcellular location">
    <subcellularLocation>
        <location evidence="1">Secreted</location>
    </subcellularLocation>
    <subcellularLocation>
        <location evidence="1">Membrane</location>
    </subcellularLocation>
    <text evidence="1">Associated to membranes via binding to ATP6AP2.</text>
</comment>
<comment type="similarity">
    <text evidence="6">Belongs to the peptidase A1 family.</text>
</comment>
<dbReference type="EC" id="3.4.23.15" evidence="1"/>
<dbReference type="EMBL" id="AJ132342">
    <property type="protein sequence ID" value="CAB64879.1"/>
    <property type="molecule type" value="mRNA"/>
</dbReference>
<dbReference type="RefSeq" id="XP_008983729.3">
    <property type="nucleotide sequence ID" value="XM_008985481.4"/>
</dbReference>
<dbReference type="SMR" id="Q9TSZ1"/>
<dbReference type="FunCoup" id="Q9TSZ1">
    <property type="interactions" value="54"/>
</dbReference>
<dbReference type="STRING" id="9483.ENSCJAP00000046960"/>
<dbReference type="ChEMBL" id="CHEMBL6056"/>
<dbReference type="DrugCentral" id="Q9TSZ1"/>
<dbReference type="MEROPS" id="A01.007"/>
<dbReference type="GlyCosmos" id="Q9TSZ1">
    <property type="glycosylation" value="2 sites, No reported glycans"/>
</dbReference>
<dbReference type="Ensembl" id="ENSCJAT00000061949.4">
    <property type="protein sequence ID" value="ENSCJAP00000046960.3"/>
    <property type="gene ID" value="ENSCJAG00000016857.6"/>
</dbReference>
<dbReference type="GeneID" id="100399036"/>
<dbReference type="KEGG" id="cjc:100399036"/>
<dbReference type="CTD" id="5972"/>
<dbReference type="eggNOG" id="KOG1339">
    <property type="taxonomic scope" value="Eukaryota"/>
</dbReference>
<dbReference type="GeneTree" id="ENSGT00940000157898"/>
<dbReference type="HOGENOM" id="CLU_013253_3_3_1"/>
<dbReference type="InParanoid" id="Q9TSZ1"/>
<dbReference type="OMA" id="DMQYYGE"/>
<dbReference type="OrthoDB" id="771136at2759"/>
<dbReference type="PRO" id="PR:Q9TSZ1"/>
<dbReference type="Proteomes" id="UP000008225">
    <property type="component" value="Chromosome 19"/>
</dbReference>
<dbReference type="GO" id="GO:0045177">
    <property type="term" value="C:apical part of cell"/>
    <property type="evidence" value="ECO:0007669"/>
    <property type="project" value="Ensembl"/>
</dbReference>
<dbReference type="GO" id="GO:0005615">
    <property type="term" value="C:extracellular space"/>
    <property type="evidence" value="ECO:0007669"/>
    <property type="project" value="Ensembl"/>
</dbReference>
<dbReference type="GO" id="GO:0016020">
    <property type="term" value="C:membrane"/>
    <property type="evidence" value="ECO:0007669"/>
    <property type="project" value="UniProtKB-SubCell"/>
</dbReference>
<dbReference type="GO" id="GO:0004190">
    <property type="term" value="F:aspartic-type endopeptidase activity"/>
    <property type="evidence" value="ECO:0007669"/>
    <property type="project" value="UniProtKB-KW"/>
</dbReference>
<dbReference type="GO" id="GO:0005102">
    <property type="term" value="F:signaling receptor binding"/>
    <property type="evidence" value="ECO:0007669"/>
    <property type="project" value="Ensembl"/>
</dbReference>
<dbReference type="GO" id="GO:0002003">
    <property type="term" value="P:angiotensin maturation"/>
    <property type="evidence" value="ECO:0007669"/>
    <property type="project" value="Ensembl"/>
</dbReference>
<dbReference type="GO" id="GO:0048469">
    <property type="term" value="P:cell maturation"/>
    <property type="evidence" value="ECO:0007669"/>
    <property type="project" value="Ensembl"/>
</dbReference>
<dbReference type="GO" id="GO:0042756">
    <property type="term" value="P:drinking behavior"/>
    <property type="evidence" value="ECO:0007669"/>
    <property type="project" value="Ensembl"/>
</dbReference>
<dbReference type="GO" id="GO:0009755">
    <property type="term" value="P:hormone-mediated signaling pathway"/>
    <property type="evidence" value="ECO:0007669"/>
    <property type="project" value="Ensembl"/>
</dbReference>
<dbReference type="GO" id="GO:0008584">
    <property type="term" value="P:male gonad development"/>
    <property type="evidence" value="ECO:0007669"/>
    <property type="project" value="Ensembl"/>
</dbReference>
<dbReference type="GO" id="GO:0001823">
    <property type="term" value="P:mesonephros development"/>
    <property type="evidence" value="ECO:0007669"/>
    <property type="project" value="Ensembl"/>
</dbReference>
<dbReference type="GO" id="GO:0043408">
    <property type="term" value="P:regulation of MAPK cascade"/>
    <property type="evidence" value="ECO:0007669"/>
    <property type="project" value="Ensembl"/>
</dbReference>
<dbReference type="GO" id="GO:0002018">
    <property type="term" value="P:renin-angiotensin regulation of aldosterone production"/>
    <property type="evidence" value="ECO:0007669"/>
    <property type="project" value="Ensembl"/>
</dbReference>
<dbReference type="CDD" id="cd05487">
    <property type="entry name" value="renin_like"/>
    <property type="match status" value="1"/>
</dbReference>
<dbReference type="FunFam" id="2.40.70.10:FF:000037">
    <property type="entry name" value="Renin"/>
    <property type="match status" value="1"/>
</dbReference>
<dbReference type="FunFam" id="2.40.70.10:FF:000032">
    <property type="entry name" value="renin"/>
    <property type="match status" value="1"/>
</dbReference>
<dbReference type="Gene3D" id="2.40.70.10">
    <property type="entry name" value="Acid Proteases"/>
    <property type="match status" value="2"/>
</dbReference>
<dbReference type="InterPro" id="IPR001461">
    <property type="entry name" value="Aspartic_peptidase_A1"/>
</dbReference>
<dbReference type="InterPro" id="IPR001969">
    <property type="entry name" value="Aspartic_peptidase_AS"/>
</dbReference>
<dbReference type="InterPro" id="IPR012848">
    <property type="entry name" value="Aspartic_peptidase_N"/>
</dbReference>
<dbReference type="InterPro" id="IPR033121">
    <property type="entry name" value="PEPTIDASE_A1"/>
</dbReference>
<dbReference type="InterPro" id="IPR021109">
    <property type="entry name" value="Peptidase_aspartic_dom_sf"/>
</dbReference>
<dbReference type="InterPro" id="IPR034135">
    <property type="entry name" value="Renin-like_dom"/>
</dbReference>
<dbReference type="PANTHER" id="PTHR47966">
    <property type="entry name" value="BETA-SITE APP-CLEAVING ENZYME, ISOFORM A-RELATED"/>
    <property type="match status" value="1"/>
</dbReference>
<dbReference type="PANTHER" id="PTHR47966:SF24">
    <property type="entry name" value="RENIN"/>
    <property type="match status" value="1"/>
</dbReference>
<dbReference type="Pfam" id="PF07966">
    <property type="entry name" value="A1_Propeptide"/>
    <property type="match status" value="1"/>
</dbReference>
<dbReference type="Pfam" id="PF00026">
    <property type="entry name" value="Asp"/>
    <property type="match status" value="1"/>
</dbReference>
<dbReference type="PRINTS" id="PR00792">
    <property type="entry name" value="PEPSIN"/>
</dbReference>
<dbReference type="SUPFAM" id="SSF50630">
    <property type="entry name" value="Acid proteases"/>
    <property type="match status" value="1"/>
</dbReference>
<dbReference type="PROSITE" id="PS00141">
    <property type="entry name" value="ASP_PROTEASE"/>
    <property type="match status" value="2"/>
</dbReference>
<dbReference type="PROSITE" id="PS51767">
    <property type="entry name" value="PEPTIDASE_A1"/>
    <property type="match status" value="1"/>
</dbReference>
<feature type="signal peptide" evidence="1">
    <location>
        <begin position="1"/>
        <end position="23"/>
    </location>
</feature>
<feature type="propeptide" id="PRO_0000026077" description="Activation peptide" evidence="1">
    <location>
        <begin position="24"/>
        <end position="60"/>
    </location>
</feature>
<feature type="chain" id="PRO_0000026078" description="Renin">
    <location>
        <begin position="61"/>
        <end position="400"/>
    </location>
</feature>
<feature type="domain" description="Peptidase A1" evidence="3">
    <location>
        <begin position="80"/>
        <end position="397"/>
    </location>
</feature>
<feature type="active site" evidence="4">
    <location>
        <position position="98"/>
    </location>
</feature>
<feature type="active site" evidence="4">
    <location>
        <position position="286"/>
    </location>
</feature>
<feature type="glycosylation site" description="N-linked (GlcNAc...) asparagine" evidence="2">
    <location>
        <position position="65"/>
    </location>
</feature>
<feature type="glycosylation site" description="N-linked (GlcNAc...) asparagine" evidence="2">
    <location>
        <position position="135"/>
    </location>
</feature>
<feature type="disulfide bond" evidence="1">
    <location>
        <begin position="111"/>
        <end position="118"/>
    </location>
</feature>
<feature type="disulfide bond" evidence="1">
    <location>
        <begin position="277"/>
        <end position="281"/>
    </location>
</feature>
<feature type="disulfide bond" evidence="1">
    <location>
        <begin position="319"/>
        <end position="356"/>
    </location>
</feature>
<reference key="1">
    <citation type="journal article" date="1999" name="J. Cardiovasc. Pharmacol.">
        <title>Cloning and characterization of marmoset renin: comparison with human renin.</title>
        <authorList>
            <person name="Valdenaire O."/>
            <person name="Breu V."/>
            <person name="Giller T."/>
            <person name="Bur D."/>
            <person name="Fischli W."/>
        </authorList>
    </citation>
    <scope>NUCLEOTIDE SEQUENCE [MRNA]</scope>
</reference>
<keyword id="KW-0064">Aspartyl protease</keyword>
<keyword id="KW-1015">Disulfide bond</keyword>
<keyword id="KW-0325">Glycoprotein</keyword>
<keyword id="KW-0378">Hydrolase</keyword>
<keyword id="KW-0472">Membrane</keyword>
<keyword id="KW-0645">Protease</keyword>
<keyword id="KW-1185">Reference proteome</keyword>
<keyword id="KW-0964">Secreted</keyword>
<keyword id="KW-0732">Signal</keyword>
<keyword id="KW-0865">Zymogen</keyword>
<protein>
    <recommendedName>
        <fullName evidence="5">Renin</fullName>
        <ecNumber evidence="1">3.4.23.15</ecNumber>
    </recommendedName>
    <alternativeName>
        <fullName>Angiotensinogenase</fullName>
    </alternativeName>
</protein>
<organism>
    <name type="scientific">Callithrix jacchus</name>
    <name type="common">White-tufted-ear marmoset</name>
    <dbReference type="NCBI Taxonomy" id="9483"/>
    <lineage>
        <taxon>Eukaryota</taxon>
        <taxon>Metazoa</taxon>
        <taxon>Chordata</taxon>
        <taxon>Craniata</taxon>
        <taxon>Vertebrata</taxon>
        <taxon>Euteleostomi</taxon>
        <taxon>Mammalia</taxon>
        <taxon>Eutheria</taxon>
        <taxon>Euarchontoglires</taxon>
        <taxon>Primates</taxon>
        <taxon>Haplorrhini</taxon>
        <taxon>Platyrrhini</taxon>
        <taxon>Cebidae</taxon>
        <taxon>Callitrichinae</taxon>
        <taxon>Callithrix</taxon>
        <taxon>Callithrix</taxon>
    </lineage>
</organism>
<evidence type="ECO:0000250" key="1">
    <source>
        <dbReference type="UniProtKB" id="P00797"/>
    </source>
</evidence>
<evidence type="ECO:0000255" key="2"/>
<evidence type="ECO:0000255" key="3">
    <source>
        <dbReference type="PROSITE-ProRule" id="PRU01103"/>
    </source>
</evidence>
<evidence type="ECO:0000255" key="4">
    <source>
        <dbReference type="PROSITE-ProRule" id="PRU10094"/>
    </source>
</evidence>
<evidence type="ECO:0000303" key="5">
    <source>
    </source>
</evidence>
<evidence type="ECO:0000305" key="6"/>